<organism>
    <name type="scientific">Conus radiatus</name>
    <name type="common">Rayed cone</name>
    <dbReference type="NCBI Taxonomy" id="61198"/>
    <lineage>
        <taxon>Eukaryota</taxon>
        <taxon>Metazoa</taxon>
        <taxon>Spiralia</taxon>
        <taxon>Lophotrochozoa</taxon>
        <taxon>Mollusca</taxon>
        <taxon>Gastropoda</taxon>
        <taxon>Caenogastropoda</taxon>
        <taxon>Neogastropoda</taxon>
        <taxon>Conoidea</taxon>
        <taxon>Conidae</taxon>
        <taxon>Conus</taxon>
        <taxon>Phasmoconus</taxon>
    </lineage>
</organism>
<dbReference type="SMR" id="P58806"/>
<dbReference type="ConoServer" id="1375">
    <property type="toxin name" value="Conantokin-R precursor"/>
</dbReference>
<dbReference type="GO" id="GO:0005576">
    <property type="term" value="C:extracellular region"/>
    <property type="evidence" value="ECO:0007669"/>
    <property type="project" value="UniProtKB-SubCell"/>
</dbReference>
<dbReference type="GO" id="GO:0035792">
    <property type="term" value="C:host cell postsynaptic membrane"/>
    <property type="evidence" value="ECO:0007669"/>
    <property type="project" value="UniProtKB-KW"/>
</dbReference>
<dbReference type="GO" id="GO:0099106">
    <property type="term" value="F:ion channel regulator activity"/>
    <property type="evidence" value="ECO:0007669"/>
    <property type="project" value="UniProtKB-KW"/>
</dbReference>
<dbReference type="GO" id="GO:0046872">
    <property type="term" value="F:metal ion binding"/>
    <property type="evidence" value="ECO:0007669"/>
    <property type="project" value="UniProtKB-KW"/>
</dbReference>
<dbReference type="GO" id="GO:0090729">
    <property type="term" value="F:toxin activity"/>
    <property type="evidence" value="ECO:0007669"/>
    <property type="project" value="UniProtKB-KW"/>
</dbReference>
<dbReference type="InterPro" id="IPR005918">
    <property type="entry name" value="Conantokin_CS"/>
</dbReference>
<dbReference type="PROSITE" id="PS60025">
    <property type="entry name" value="CONANTOKIN"/>
    <property type="match status" value="1"/>
</dbReference>
<feature type="signal peptide" evidence="2">
    <location>
        <begin position="1"/>
        <end position="24"/>
    </location>
</feature>
<feature type="propeptide" id="PRO_0000035064" evidence="4">
    <location>
        <begin position="25"/>
        <end position="80"/>
    </location>
</feature>
<feature type="peptide" id="PRO_0000035065" description="Conantokin-R" evidence="4">
    <location>
        <begin position="81"/>
        <end position="107"/>
    </location>
</feature>
<feature type="region of interest" description="Disordered" evidence="3">
    <location>
        <begin position="26"/>
        <end position="64"/>
    </location>
</feature>
<feature type="binding site" description="via 4-carboxyglutamate" evidence="1">
    <location>
        <position position="91"/>
    </location>
    <ligand>
        <name>a divalent metal cation</name>
        <dbReference type="ChEBI" id="CHEBI:60240"/>
    </ligand>
</feature>
<feature type="binding site" description="via 4-carboxyglutamate" evidence="1">
    <location>
        <position position="95"/>
    </location>
    <ligand>
        <name>a divalent metal cation</name>
        <dbReference type="ChEBI" id="CHEBI:60240"/>
    </ligand>
</feature>
<feature type="site" description="Significant for the subtype selectivity between NR2B/GRIN2B and NR2D/GRIN2D (potent for NR2B/GRIN2B but not for NR2D/GRIN2D)">
    <location>
        <position position="85"/>
    </location>
</feature>
<feature type="modified residue" description="4-carboxyglutamate" evidence="4">
    <location>
        <position position="83"/>
    </location>
</feature>
<feature type="modified residue" description="4-carboxyglutamate" evidence="4">
    <location>
        <position position="84"/>
    </location>
</feature>
<feature type="modified residue" description="4-carboxyglutamate" evidence="4">
    <location>
        <position position="91"/>
    </location>
</feature>
<feature type="modified residue" description="4-carboxyglutamate" evidence="4">
    <location>
        <position position="95"/>
    </location>
</feature>
<feature type="disulfide bond" evidence="4">
    <location>
        <begin position="101"/>
        <end position="105"/>
    </location>
</feature>
<feature type="mutagenesis site" description="No change in potency for NR2B/GRIN2B and 3-fold increase in potency for NR2D/GRIN2D." evidence="7">
    <original>VA</original>
    <variation>YS</variation>
    <location>
        <begin position="85"/>
        <end position="86"/>
    </location>
</feature>
<feature type="mutagenesis site" description="Little decrease in potency for both NR2A and NR2B." evidence="6 7">
    <original>V</original>
    <variation>I</variation>
    <location>
        <position position="85"/>
    </location>
</feature>
<feature type="mutagenesis site" description="No change in potency for both NR2A and NR2B." evidence="6 7">
    <original>V</original>
    <variation>L</variation>
    <location>
        <position position="85"/>
    </location>
</feature>
<feature type="mutagenesis site" description="Little increase in potency for both NR2A and NR2B." evidence="6 7">
    <original>V</original>
    <variation>Y</variation>
    <location>
        <position position="85"/>
    </location>
</feature>
<feature type="mutagenesis site" description="No change in potency for NR2B/GRIN2B and 3-fold increase in potency for NR2D/GRIN2D." evidence="6 7">
    <original>V</original>
    <variation>Y</variation>
    <location>
        <position position="85"/>
    </location>
</feature>
<feature type="mutagenesis site" description="Important decrease in potency for NR2B/GRIN2B and complete loss in potency for NR2D/GRIN2D." evidence="7">
    <original>MAA</original>
    <variation>FI</variation>
    <location>
        <begin position="88"/>
        <end position="90"/>
    </location>
</feature>
<sequence length="107" mass="11834">MQLYTYLYLLVSLVTFYLILGTGTLGHGGALTERRSTDATALKPEPVLLQKSSARSTDDNGNDRLTQMKRILKKRGNKARGEEEVAKMAAELARENIAKGCKVNCYP</sequence>
<reference key="1">
    <citation type="journal article" date="2002" name="Epilepsy Res.">
        <title>Conantokin-L, a new NMDA receptor antagonist: determinants for anticonvulsant potency.</title>
        <authorList>
            <person name="Jimenez E.C."/>
            <person name="Donevan S."/>
            <person name="Walker C."/>
            <person name="Zhou L.-M."/>
            <person name="Nielsen J."/>
            <person name="Cruz L.J."/>
            <person name="Armstrong H."/>
            <person name="White H.S."/>
            <person name="Olivera B.M."/>
        </authorList>
    </citation>
    <scope>NUCLEOTIDE SEQUENCE [MRNA]</scope>
    <source>
        <tissue>Venom duct</tissue>
    </source>
</reference>
<reference key="2">
    <citation type="journal article" date="2000" name="J. Pharmacol. Exp. Ther.">
        <title>In vitro and in vivo characterization of conantokin-R, a selective NMDA receptor antagonist isolated from the venom of the fish-hunting snail Conus radiatus.</title>
        <authorList>
            <person name="White H.S."/>
            <person name="McCabe R.T."/>
            <person name="Armstrong H."/>
            <person name="Donevan S.D."/>
            <person name="Cruz L.J."/>
            <person name="Abogadie F.C."/>
            <person name="Torres J."/>
            <person name="Rivier J.E."/>
            <person name="Paarmann I."/>
            <person name="Hollmann M."/>
            <person name="Olivera B.M."/>
        </authorList>
    </citation>
    <scope>PROTEIN SEQUENCE OF 81-107</scope>
    <scope>GAMMA-CARBOXYGLUTAMATION AT GLU-83; GLU-84; GLU-91 AND GLU-95</scope>
    <scope>FUNCTION</scope>
    <scope>SYNTHESIS OF 81-107</scope>
    <scope>MASS SPECTROMETRY</scope>
    <scope>SUBCELLULAR LOCATION</scope>
    <scope>DISULFIDE BOND</scope>
    <source>
        <tissue>Venom</tissue>
    </source>
</reference>
<reference key="3">
    <citation type="journal article" date="2000" name="FEBS Lett.">
        <title>Structure-function relationships of the NMDA receptor antagonist peptide, conantokin-R.</title>
        <authorList>
            <person name="Blandl T."/>
            <person name="Warder S.E."/>
            <person name="Prorok M."/>
            <person name="Castellino F.J."/>
        </authorList>
    </citation>
    <scope>SYNTHESIS OF 81-107</scope>
    <scope>METAL-BINDING</scope>
    <scope>COFACTOR</scope>
</reference>
<reference key="4">
    <citation type="journal article" date="2001" name="J. Biol. Chem.">
        <title>The amino acid residue at sequence position 5 in the conantokin peptides partially governs subunit-selective antagonism of recombinant N-methyl-D-aspartate receptors.</title>
        <authorList>
            <person name="Klein R.C."/>
            <person name="Prorok M."/>
            <person name="Galdzicki Z."/>
            <person name="Castellino F.J."/>
        </authorList>
    </citation>
    <scope>MUTAGENESIS OF VAL-85</scope>
    <scope>SITE</scope>
</reference>
<reference key="5">
    <citation type="journal article" date="2009" name="Biochemistry">
        <title>Conantokin-Br from Conus brettinghami and selectivity determinants for the NR2D subunit of the NMDA receptor.</title>
        <authorList>
            <person name="Twede V.D."/>
            <person name="Teichert R.W."/>
            <person name="Walker C.S."/>
            <person name="Gruszczynski P."/>
            <person name="Kazmierkiewicz R."/>
            <person name="Bulaj G."/>
            <person name="Olivera B.M."/>
        </authorList>
    </citation>
    <scope>SYNTHESIS OF 81-107</scope>
    <scope>MUTAGENESIS OF 88-MET--ALA-90; 85-VAL--ALA-86 AND VAL-85</scope>
    <scope>SITE</scope>
    <source>
        <strain>Conus sulcatus brettinghami</strain>
    </source>
</reference>
<protein>
    <recommendedName>
        <fullName evidence="8 9">Conantokin-R</fullName>
        <shortName evidence="8 9">Con-R</shortName>
    </recommendedName>
</protein>
<evidence type="ECO:0000250" key="1">
    <source>
        <dbReference type="UniProtKB" id="P07231"/>
    </source>
</evidence>
<evidence type="ECO:0000255" key="2"/>
<evidence type="ECO:0000256" key="3">
    <source>
        <dbReference type="SAM" id="MobiDB-lite"/>
    </source>
</evidence>
<evidence type="ECO:0000269" key="4">
    <source>
    </source>
</evidence>
<evidence type="ECO:0000269" key="5">
    <source>
    </source>
</evidence>
<evidence type="ECO:0000269" key="6">
    <source>
    </source>
</evidence>
<evidence type="ECO:0000269" key="7">
    <source>
    </source>
</evidence>
<evidence type="ECO:0000303" key="8">
    <source>
    </source>
</evidence>
<evidence type="ECO:0000303" key="9">
    <source>
    </source>
</evidence>
<evidence type="ECO:0000305" key="10"/>
<evidence type="ECO:0000305" key="11">
    <source>
    </source>
</evidence>
<name>CKR_CONRA</name>
<comment type="function">
    <text evidence="4">Conantokins inhibit N-methyl-D-aspartate (NMDA) receptors. This toxin is potent in the following order of preference: NR2B approximately NR2A/GRIN2A &gt; NR2C/GRIN2C &gt;&gt; NR2D/GRIN2D. Induces sleep-like symptoms in young mice. Is a highly potent anticonvulsant compound.</text>
</comment>
<comment type="cofactor">
    <cofactor evidence="5">
        <name>Ca(2+)</name>
        <dbReference type="ChEBI" id="CHEBI:29108"/>
    </cofactor>
    <cofactor evidence="5">
        <name>Mg(2+)</name>
        <dbReference type="ChEBI" id="CHEBI:18420"/>
    </cofactor>
    <text evidence="5">Divalent cations stabilize the toxin the in alpha-helix conformation. Zinc also stabilizes the alpha-helical conformation.</text>
</comment>
<comment type="subcellular location">
    <subcellularLocation>
        <location evidence="4">Secreted</location>
    </subcellularLocation>
</comment>
<comment type="tissue specificity">
    <text evidence="11">Expressed by the venom duct.</text>
</comment>
<comment type="domain">
    <text evidence="10">The cysteine framework is C-C.</text>
</comment>
<comment type="mass spectrometry" mass="3098.0" method="Unknown" evidence="4"/>
<comment type="miscellaneous">
    <text>Exists in two forms, due to cis-trans isomerization at 106-Tyr-Pro-107.</text>
</comment>
<comment type="similarity">
    <text evidence="10">Belongs to the conotoxin B superfamily.</text>
</comment>
<proteinExistence type="evidence at protein level"/>
<keyword id="KW-0106">Calcium</keyword>
<keyword id="KW-0903">Direct protein sequencing</keyword>
<keyword id="KW-1015">Disulfide bond</keyword>
<keyword id="KW-0301">Gamma-carboxyglutamic acid</keyword>
<keyword id="KW-0872">Ion channel impairing toxin</keyword>
<keyword id="KW-1028">Ionotropic glutamate receptor inhibitor</keyword>
<keyword id="KW-0460">Magnesium</keyword>
<keyword id="KW-0479">Metal-binding</keyword>
<keyword id="KW-0528">Neurotoxin</keyword>
<keyword id="KW-0629">Postsynaptic neurotoxin</keyword>
<keyword id="KW-0964">Secreted</keyword>
<keyword id="KW-0732">Signal</keyword>
<keyword id="KW-0800">Toxin</keyword>
<accession>P58806</accession>